<organism evidence="19">
    <name type="scientific">Oryza sativa subsp. japonica</name>
    <name type="common">Rice</name>
    <dbReference type="NCBI Taxonomy" id="39947"/>
    <lineage>
        <taxon>Eukaryota</taxon>
        <taxon>Viridiplantae</taxon>
        <taxon>Streptophyta</taxon>
        <taxon>Embryophyta</taxon>
        <taxon>Tracheophyta</taxon>
        <taxon>Spermatophyta</taxon>
        <taxon>Magnoliopsida</taxon>
        <taxon>Liliopsida</taxon>
        <taxon>Poales</taxon>
        <taxon>Poaceae</taxon>
        <taxon>BOP clade</taxon>
        <taxon>Oryzoideae</taxon>
        <taxon>Oryzeae</taxon>
        <taxon>Oryzinae</taxon>
        <taxon>Oryza</taxon>
        <taxon>Oryza sativa</taxon>
    </lineage>
</organism>
<gene>
    <name evidence="12" type="primary">TPR1</name>
    <name evidence="11" type="synonym">ASPR2</name>
    <name evidence="13" type="synonym">TPR2</name>
    <name evidence="16" type="ordered locus">Os01g0254100</name>
    <name evidence="14" type="ordered locus">LOC_Os01g15020</name>
    <name evidence="18" type="ORF">OsJ_01134</name>
    <name evidence="17" type="ORF">OSNPB_010254100</name>
    <name evidence="15" type="ORF">P0705D01.10-1</name>
</gene>
<name>TPR1_ORYSJ</name>
<sequence length="1129" mass="125095">MSSLSRELVFLILQFLDEEKFKETVHKLEQESGFFFNMKYFEEKVHAGEWDEVEKYLSGFTKVDDNRYSMKIFFEIRKQKYLEALDRHDRAKAVDILVKDLKVFSTFNEELYKEITQLLTLENFRENEQLSKYGDTKSARSIMLIELKKLIEANPLFREKLVFPTLKASRLRTLINQSLNWQHQLCKNPRPNPDIKTLFTDHTCTPPNGARASPVSVPLAAVPKAGGTYPPLTAHTPFQPPPAGPSLAGWMANAAAATSSVPSAVVAASSLPVPPNQAVPIMKRPTITDYQSAESEQLMKRLRPSGHGVDEATYPAPIPQPLWSVEDLPRTVACTLSQGSSVTSMDFHPTRHTLLLVGSTNGEITLWEVGMRERLFSKPFKIWDIQACSPQFQSVAKESSISINRVTWSPDGDLIGVAFAKHLIHLHAYQQPNETRQVLEIDAHSGAVNDIAFSRPNKQLCVVTCGDDRLIKVWDMHGQKLFSFEGHEAPVYSICPHHKESIQFIFSTSLDGKIKAWLYDHMGSRVDYDAPGKWCTTMLYSADGTRLFSCGTSKDGDSYLVEWNESEGSIKRTYSGFRKKSAGVGVVQFDTAQNHILAAGEDNQIKFWDVDNTTMLSSTEADGGLPGLPRLRFNKEGNLLAVTTVDNGFKILANADGLRTLRAFGNRPFEAFRSQYEASSMKVSGAPVVAGISPNIGRMDHIDRNSPAKPSPIMNGGDPASRSIDIKPRISEERPDKAKPWELMEVLNAQQCRVATMPETPDQASKVVRLLYTNSGVGLLALGSNAIQRLWKWARNDQNPSGKATANVVPQHWQPNSGLVMQNDTADTNPEDAVPCIALSKNDSYVMSACGGKVSLFNMMTFKVMTTFMPPPPASTFLAFHPQDNNIIAIGMEDSTIHIYNVRVDEVKTRLKGHQRRITGLAFSNNLQILVSSGADAQLCVWATDTWEKKKSVAIQMPAGKTPSGDTWVQFNSDWSRLLVVHETQLAIYDASKMERIYQWIPQDALSAPISHASYSRNSQLVFAAFTDGNIGIFDVENLRLRCRIAPPAYLSSAAINSNPSVYPLVVAAHPQESNQFAVGLSDGSVKVIEPLESEGKWGTTPPTENGVPNGRTSTSSATSNPAADQIQR</sequence>
<reference key="1">
    <citation type="journal article" date="2012" name="Plant J.">
        <title>Aberrant spikelet and panicle1, encoding a TOPLESS-related transcriptional co-repressor, is involved in the regulation of meristem fate in rice.</title>
        <authorList>
            <person name="Yoshida A."/>
            <person name="Ohmori Y."/>
            <person name="Kitano H."/>
            <person name="Taguchi-Shiobara F."/>
            <person name="Hirano H."/>
        </authorList>
    </citation>
    <scope>NUCLEOTIDE SEQUENCE [MRNA]</scope>
    <scope>GENE FAMILY</scope>
    <scope>NOMENCLATURE</scope>
</reference>
<reference key="2">
    <citation type="journal article" date="2002" name="Nature">
        <title>The genome sequence and structure of rice chromosome 1.</title>
        <authorList>
            <person name="Sasaki T."/>
            <person name="Matsumoto T."/>
            <person name="Yamamoto K."/>
            <person name="Sakata K."/>
            <person name="Baba T."/>
            <person name="Katayose Y."/>
            <person name="Wu J."/>
            <person name="Niimura Y."/>
            <person name="Cheng Z."/>
            <person name="Nagamura Y."/>
            <person name="Antonio B.A."/>
            <person name="Kanamori H."/>
            <person name="Hosokawa S."/>
            <person name="Masukawa M."/>
            <person name="Arikawa K."/>
            <person name="Chiden Y."/>
            <person name="Hayashi M."/>
            <person name="Okamoto M."/>
            <person name="Ando T."/>
            <person name="Aoki H."/>
            <person name="Arita K."/>
            <person name="Hamada M."/>
            <person name="Harada C."/>
            <person name="Hijishita S."/>
            <person name="Honda M."/>
            <person name="Ichikawa Y."/>
            <person name="Idonuma A."/>
            <person name="Iijima M."/>
            <person name="Ikeda M."/>
            <person name="Ikeno M."/>
            <person name="Ito S."/>
            <person name="Ito T."/>
            <person name="Ito Y."/>
            <person name="Ito Y."/>
            <person name="Iwabuchi A."/>
            <person name="Kamiya K."/>
            <person name="Karasawa W."/>
            <person name="Katagiri S."/>
            <person name="Kikuta A."/>
            <person name="Kobayashi N."/>
            <person name="Kono I."/>
            <person name="Machita K."/>
            <person name="Maehara T."/>
            <person name="Mizuno H."/>
            <person name="Mizubayashi T."/>
            <person name="Mukai Y."/>
            <person name="Nagasaki H."/>
            <person name="Nakashima M."/>
            <person name="Nakama Y."/>
            <person name="Nakamichi Y."/>
            <person name="Nakamura M."/>
            <person name="Namiki N."/>
            <person name="Negishi M."/>
            <person name="Ohta I."/>
            <person name="Ono N."/>
            <person name="Saji S."/>
            <person name="Sakai K."/>
            <person name="Shibata M."/>
            <person name="Shimokawa T."/>
            <person name="Shomura A."/>
            <person name="Song J."/>
            <person name="Takazaki Y."/>
            <person name="Terasawa K."/>
            <person name="Tsuji K."/>
            <person name="Waki K."/>
            <person name="Yamagata H."/>
            <person name="Yamane H."/>
            <person name="Yoshiki S."/>
            <person name="Yoshihara R."/>
            <person name="Yukawa K."/>
            <person name="Zhong H."/>
            <person name="Iwama H."/>
            <person name="Endo T."/>
            <person name="Ito H."/>
            <person name="Hahn J.H."/>
            <person name="Kim H.-I."/>
            <person name="Eun M.-Y."/>
            <person name="Yano M."/>
            <person name="Jiang J."/>
            <person name="Gojobori T."/>
        </authorList>
    </citation>
    <scope>NUCLEOTIDE SEQUENCE [LARGE SCALE GENOMIC DNA]</scope>
    <source>
        <strain>cv. Nipponbare</strain>
    </source>
</reference>
<reference key="3">
    <citation type="journal article" date="2005" name="Nature">
        <title>The map-based sequence of the rice genome.</title>
        <authorList>
            <consortium name="International rice genome sequencing project (IRGSP)"/>
        </authorList>
    </citation>
    <scope>NUCLEOTIDE SEQUENCE [LARGE SCALE GENOMIC DNA]</scope>
    <source>
        <strain>cv. Nipponbare</strain>
    </source>
</reference>
<reference key="4">
    <citation type="journal article" date="2008" name="Nucleic Acids Res.">
        <title>The rice annotation project database (RAP-DB): 2008 update.</title>
        <authorList>
            <consortium name="The rice annotation project (RAP)"/>
        </authorList>
    </citation>
    <scope>GENOME REANNOTATION</scope>
    <source>
        <strain>cv. Nipponbare</strain>
    </source>
</reference>
<reference key="5">
    <citation type="journal article" date="2013" name="Rice">
        <title>Improvement of the Oryza sativa Nipponbare reference genome using next generation sequence and optical map data.</title>
        <authorList>
            <person name="Kawahara Y."/>
            <person name="de la Bastide M."/>
            <person name="Hamilton J.P."/>
            <person name="Kanamori H."/>
            <person name="McCombie W.R."/>
            <person name="Ouyang S."/>
            <person name="Schwartz D.C."/>
            <person name="Tanaka T."/>
            <person name="Wu J."/>
            <person name="Zhou S."/>
            <person name="Childs K.L."/>
            <person name="Davidson R.M."/>
            <person name="Lin H."/>
            <person name="Quesada-Ocampo L."/>
            <person name="Vaillancourt B."/>
            <person name="Sakai H."/>
            <person name="Lee S.S."/>
            <person name="Kim J."/>
            <person name="Numa H."/>
            <person name="Itoh T."/>
            <person name="Buell C.R."/>
            <person name="Matsumoto T."/>
        </authorList>
    </citation>
    <scope>GENOME REANNOTATION</scope>
    <source>
        <strain>cv. Nipponbare</strain>
    </source>
</reference>
<reference key="6">
    <citation type="journal article" date="2005" name="PLoS Biol.">
        <title>The genomes of Oryza sativa: a history of duplications.</title>
        <authorList>
            <person name="Yu J."/>
            <person name="Wang J."/>
            <person name="Lin W."/>
            <person name="Li S."/>
            <person name="Li H."/>
            <person name="Zhou J."/>
            <person name="Ni P."/>
            <person name="Dong W."/>
            <person name="Hu S."/>
            <person name="Zeng C."/>
            <person name="Zhang J."/>
            <person name="Zhang Y."/>
            <person name="Li R."/>
            <person name="Xu Z."/>
            <person name="Li S."/>
            <person name="Li X."/>
            <person name="Zheng H."/>
            <person name="Cong L."/>
            <person name="Lin L."/>
            <person name="Yin J."/>
            <person name="Geng J."/>
            <person name="Li G."/>
            <person name="Shi J."/>
            <person name="Liu J."/>
            <person name="Lv H."/>
            <person name="Li J."/>
            <person name="Wang J."/>
            <person name="Deng Y."/>
            <person name="Ran L."/>
            <person name="Shi X."/>
            <person name="Wang X."/>
            <person name="Wu Q."/>
            <person name="Li C."/>
            <person name="Ren X."/>
            <person name="Wang J."/>
            <person name="Wang X."/>
            <person name="Li D."/>
            <person name="Liu D."/>
            <person name="Zhang X."/>
            <person name="Ji Z."/>
            <person name="Zhao W."/>
            <person name="Sun Y."/>
            <person name="Zhang Z."/>
            <person name="Bao J."/>
            <person name="Han Y."/>
            <person name="Dong L."/>
            <person name="Ji J."/>
            <person name="Chen P."/>
            <person name="Wu S."/>
            <person name="Liu J."/>
            <person name="Xiao Y."/>
            <person name="Bu D."/>
            <person name="Tan J."/>
            <person name="Yang L."/>
            <person name="Ye C."/>
            <person name="Zhang J."/>
            <person name="Xu J."/>
            <person name="Zhou Y."/>
            <person name="Yu Y."/>
            <person name="Zhang B."/>
            <person name="Zhuang S."/>
            <person name="Wei H."/>
            <person name="Liu B."/>
            <person name="Lei M."/>
            <person name="Yu H."/>
            <person name="Li Y."/>
            <person name="Xu H."/>
            <person name="Wei S."/>
            <person name="He X."/>
            <person name="Fang L."/>
            <person name="Zhang Z."/>
            <person name="Zhang Y."/>
            <person name="Huang X."/>
            <person name="Su Z."/>
            <person name="Tong W."/>
            <person name="Li J."/>
            <person name="Tong Z."/>
            <person name="Li S."/>
            <person name="Ye J."/>
            <person name="Wang L."/>
            <person name="Fang L."/>
            <person name="Lei T."/>
            <person name="Chen C.-S."/>
            <person name="Chen H.-C."/>
            <person name="Xu Z."/>
            <person name="Li H."/>
            <person name="Huang H."/>
            <person name="Zhang F."/>
            <person name="Xu H."/>
            <person name="Li N."/>
            <person name="Zhao C."/>
            <person name="Li S."/>
            <person name="Dong L."/>
            <person name="Huang Y."/>
            <person name="Li L."/>
            <person name="Xi Y."/>
            <person name="Qi Q."/>
            <person name="Li W."/>
            <person name="Zhang B."/>
            <person name="Hu W."/>
            <person name="Zhang Y."/>
            <person name="Tian X."/>
            <person name="Jiao Y."/>
            <person name="Liang X."/>
            <person name="Jin J."/>
            <person name="Gao L."/>
            <person name="Zheng W."/>
            <person name="Hao B."/>
            <person name="Liu S.-M."/>
            <person name="Wang W."/>
            <person name="Yuan L."/>
            <person name="Cao M."/>
            <person name="McDermott J."/>
            <person name="Samudrala R."/>
            <person name="Wang J."/>
            <person name="Wong G.K.-S."/>
            <person name="Yang H."/>
        </authorList>
    </citation>
    <scope>NUCLEOTIDE SEQUENCE [LARGE SCALE GENOMIC DNA]</scope>
    <source>
        <strain>cv. Nipponbare</strain>
    </source>
</reference>
<reference key="7">
    <citation type="journal article" date="2012" name="Planta">
        <title>OsLIS-L1 encoding a lissencephaly type-1-like protein with WD40 repeats is required for plant height and male gametophyte formation in rice.</title>
        <authorList>
            <person name="Gao X."/>
            <person name="Chen Z."/>
            <person name="Zhang J."/>
            <person name="Li X."/>
            <person name="Chen G."/>
            <person name="Li X."/>
            <person name="Wu C."/>
        </authorList>
    </citation>
    <scope>TISSUE SPECIFICITY</scope>
    <scope>DEVELOPMENTAL STAGE</scope>
    <scope>GENE FAMILY</scope>
</reference>
<reference key="8">
    <citation type="journal article" date="2013" name="Nature">
        <title>DWARF 53 acts as a repressor of strigolactone signalling in rice.</title>
        <authorList>
            <person name="Jiang L."/>
            <person name="Liu X."/>
            <person name="Xiong G."/>
            <person name="Liu H."/>
            <person name="Chen F."/>
            <person name="Wang L."/>
            <person name="Meng X."/>
            <person name="Liu G."/>
            <person name="Yu H."/>
            <person name="Yuan Y."/>
            <person name="Yi W."/>
            <person name="Zhao L."/>
            <person name="Ma H."/>
            <person name="He Y."/>
            <person name="Wu Z."/>
            <person name="Melcher K."/>
            <person name="Qian Q."/>
            <person name="Xu H.E."/>
            <person name="Wang Y."/>
            <person name="Li J."/>
        </authorList>
    </citation>
    <scope>INTERACTION WITH D53</scope>
    <scope>GENE FAMILY</scope>
    <scope>NOMENCLATURE</scope>
</reference>
<reference key="9">
    <citation type="journal article" date="2015" name="J. Genet. Genomics">
        <title>MONOCULM 3, an ortholog of WUSCHEL in rice, is required for tiller bud formation.</title>
        <authorList>
            <person name="Lu Z."/>
            <person name="Shao G."/>
            <person name="Xiong J."/>
            <person name="Jiao Y."/>
            <person name="Wang J."/>
            <person name="Liu G."/>
            <person name="Meng X."/>
            <person name="Liang Y."/>
            <person name="Xiong G."/>
            <person name="Wang Y."/>
            <person name="Li J."/>
        </authorList>
    </citation>
    <scope>INTERACTION WITH WOX1</scope>
</reference>
<reference key="10">
    <citation type="journal article" date="2020" name="Plant Physiol.">
        <title>MORE FLORET 1 encodes a MYB transcription factor that regulates spikelet development in rice.</title>
        <authorList>
            <person name="Ren D."/>
            <person name="Rao Y."/>
            <person name="Yu H."/>
            <person name="Xu Q."/>
            <person name="Cui Y."/>
            <person name="Xia S."/>
            <person name="Yu X."/>
            <person name="Liu H."/>
            <person name="Hu H."/>
            <person name="Xue D."/>
            <person name="Zeng D."/>
            <person name="Hu J."/>
            <person name="Zhang G."/>
            <person name="Gao Z."/>
            <person name="Zhu L."/>
            <person name="Zhang Q."/>
            <person name="Shen L."/>
            <person name="Guo L."/>
            <person name="Qian Q."/>
        </authorList>
    </citation>
    <scope>INTERACTION WITH MOF1</scope>
</reference>
<reference key="11">
    <citation type="journal article" date="2015" name="Sci. Adv.">
        <title>Structural basis for recognition of diverse transcriptional repressors by the TOPLESS family of corepressors.</title>
        <authorList>
            <person name="Ke J."/>
            <person name="Ma H."/>
            <person name="Gu X."/>
            <person name="Thelen A."/>
            <person name="Brunzelle J.S."/>
            <person name="Li J."/>
            <person name="Xu H.E."/>
            <person name="Melcher K."/>
        </authorList>
    </citation>
    <scope>X-RAY CRYSTALLOGRAPHY (2.50 ANGSTROMS) OF 1-209 OF APOPROTEIN AND IN COMPLEX WITH EAR MOTIF</scope>
    <scope>SUBUNIT</scope>
    <scope>DOMAIN</scope>
    <scope>NOMENCLATURE</scope>
    <scope>MUTAGENESIS OF ARG-67; TYR-68; LYS-71; PHE-74; PHE-104; LEU-111; LEU-118; LEU-130; LEU-150 AND ASN-176</scope>
</reference>
<feature type="chain" id="PRO_0000435821" description="Protein TPR1">
    <location>
        <begin position="1"/>
        <end position="1129"/>
    </location>
</feature>
<feature type="domain" description="LisH" evidence="4">
    <location>
        <begin position="4"/>
        <end position="36"/>
    </location>
</feature>
<feature type="domain" description="CTLH" evidence="3">
    <location>
        <begin position="34"/>
        <end position="92"/>
    </location>
</feature>
<feature type="repeat" description="WD 1" evidence="2">
    <location>
        <begin position="337"/>
        <end position="377"/>
    </location>
</feature>
<feature type="repeat" description="WD 2" evidence="2">
    <location>
        <begin position="398"/>
        <end position="437"/>
    </location>
</feature>
<feature type="repeat" description="WD 3" evidence="2">
    <location>
        <begin position="443"/>
        <end position="485"/>
    </location>
</feature>
<feature type="repeat" description="WD 4" evidence="2">
    <location>
        <begin position="487"/>
        <end position="527"/>
    </location>
</feature>
<feature type="repeat" description="WD 5" evidence="2">
    <location>
        <begin position="579"/>
        <end position="618"/>
    </location>
</feature>
<feature type="repeat" description="WD 6" evidence="2">
    <location>
        <begin position="623"/>
        <end position="662"/>
    </location>
</feature>
<feature type="repeat" description="WD 7" evidence="2">
    <location>
        <begin position="762"/>
        <end position="801"/>
    </location>
</feature>
<feature type="repeat" description="WD 8" evidence="2">
    <location>
        <begin position="829"/>
        <end position="867"/>
    </location>
</feature>
<feature type="repeat" description="WD 9" evidence="2">
    <location>
        <begin position="870"/>
        <end position="910"/>
    </location>
</feature>
<feature type="repeat" description="WD 10" evidence="2">
    <location>
        <begin position="913"/>
        <end position="952"/>
    </location>
</feature>
<feature type="repeat" description="WD 11" evidence="2">
    <location>
        <begin position="1005"/>
        <end position="1044"/>
    </location>
</feature>
<feature type="region of interest" description="Disordered" evidence="5">
    <location>
        <begin position="1092"/>
        <end position="1129"/>
    </location>
</feature>
<feature type="compositionally biased region" description="Low complexity" evidence="5">
    <location>
        <begin position="1113"/>
        <end position="1129"/>
    </location>
</feature>
<feature type="mutagenesis site" description="Loss of interaction with EAR motif-containing full-length proteins." evidence="9">
    <original>R</original>
    <variation>A</variation>
    <location>
        <position position="67"/>
    </location>
</feature>
<feature type="mutagenesis site" description="Loss of interaction with EAR motif-containing full-length proteins." evidence="9">
    <original>Y</original>
    <variation>A</variation>
    <location>
        <position position="68"/>
    </location>
</feature>
<feature type="mutagenesis site" description="Loss of interaction with EAR motif-containing full-length proteins." evidence="9">
    <original>K</original>
    <variation>A</variation>
    <location>
        <position position="71"/>
    </location>
</feature>
<feature type="mutagenesis site" description="Loss of interaction with EAR motif-containing full-length proteins." evidence="9">
    <original>F</original>
    <variation>A</variation>
    <location>
        <position position="74"/>
    </location>
</feature>
<feature type="mutagenesis site" description="Loss of interaction with EAR motif-containing full-length proteins." evidence="9">
    <original>F</original>
    <variation>A</variation>
    <location>
        <position position="104"/>
    </location>
</feature>
<feature type="mutagenesis site" description="Loss of interaction with EAR motif-containing full-length proteins." evidence="9">
    <original>L</original>
    <variation>A</variation>
    <location>
        <position position="111"/>
    </location>
</feature>
<feature type="mutagenesis site" description="Loss of interaction with EAR motif-containing full-length proteins." evidence="9">
    <original>L</original>
    <variation>A</variation>
    <location>
        <position position="118"/>
    </location>
</feature>
<feature type="mutagenesis site" description="Loss of interaction with EAR motif-containing full-length proteins." evidence="9">
    <original>L</original>
    <variation>A</variation>
    <location>
        <position position="130"/>
    </location>
</feature>
<feature type="mutagenesis site" description="Loss of interaction with EAR motif-containing full-length proteins." evidence="9">
    <original>L</original>
    <variation>A</variation>
    <location>
        <position position="150"/>
    </location>
</feature>
<feature type="mutagenesis site" description="Aggregates formation." evidence="9">
    <original>N</original>
    <variation>H</variation>
    <location>
        <position position="176"/>
    </location>
</feature>
<feature type="helix" evidence="21">
    <location>
        <begin position="3"/>
        <end position="18"/>
    </location>
</feature>
<feature type="helix" evidence="21">
    <location>
        <begin position="22"/>
        <end position="32"/>
    </location>
</feature>
<feature type="helix" evidence="21">
    <location>
        <begin position="38"/>
        <end position="46"/>
    </location>
</feature>
<feature type="helix" evidence="21">
    <location>
        <begin position="50"/>
        <end position="57"/>
    </location>
</feature>
<feature type="turn" evidence="21">
    <location>
        <begin position="58"/>
        <end position="60"/>
    </location>
</feature>
<feature type="helix" evidence="21">
    <location>
        <begin position="67"/>
        <end position="86"/>
    </location>
</feature>
<feature type="helix" evidence="21">
    <location>
        <begin position="90"/>
        <end position="99"/>
    </location>
</feature>
<feature type="helix" evidence="21">
    <location>
        <begin position="102"/>
        <end position="104"/>
    </location>
</feature>
<feature type="turn" evidence="21">
    <location>
        <begin position="105"/>
        <end position="107"/>
    </location>
</feature>
<feature type="helix" evidence="21">
    <location>
        <begin position="109"/>
        <end position="117"/>
    </location>
</feature>
<feature type="helix" evidence="21">
    <location>
        <begin position="118"/>
        <end position="120"/>
    </location>
</feature>
<feature type="strand" evidence="22">
    <location>
        <begin position="121"/>
        <end position="123"/>
    </location>
</feature>
<feature type="helix" evidence="21">
    <location>
        <begin position="124"/>
        <end position="126"/>
    </location>
</feature>
<feature type="helix" evidence="22">
    <location>
        <begin position="128"/>
        <end position="130"/>
    </location>
</feature>
<feature type="helix" evidence="21">
    <location>
        <begin position="136"/>
        <end position="153"/>
    </location>
</feature>
<feature type="helix" evidence="21">
    <location>
        <begin position="155"/>
        <end position="157"/>
    </location>
</feature>
<feature type="strand" evidence="21">
    <location>
        <begin position="160"/>
        <end position="162"/>
    </location>
</feature>
<feature type="helix" evidence="21">
    <location>
        <begin position="170"/>
        <end position="184"/>
    </location>
</feature>
<feature type="strand" evidence="20">
    <location>
        <begin position="185"/>
        <end position="188"/>
    </location>
</feature>
<feature type="strand" evidence="21">
    <location>
        <begin position="198"/>
        <end position="200"/>
    </location>
</feature>
<protein>
    <recommendedName>
        <fullName evidence="12">Protein TPR1</fullName>
    </recommendedName>
    <alternativeName>
        <fullName evidence="11">Aberrant spikelet and panicle1-related 2</fullName>
    </alternativeName>
    <alternativeName>
        <fullName evidence="11">Protein ASP1-RELATED 2</fullName>
        <shortName evidence="11">OsASPR2</shortName>
    </alternativeName>
    <alternativeName>
        <fullName evidence="12">Topless-related protein 1</fullName>
    </alternativeName>
    <alternativeName>
        <fullName evidence="13">Topless-related protein 2</fullName>
        <shortName evidence="13">OsTPR2</shortName>
    </alternativeName>
</protein>
<comment type="function">
    <text evidence="1">Probable downstream regulator of strigolactones signaling.</text>
</comment>
<comment type="subunit">
    <text evidence="7 8 9 10">Tetramer (PubMed:26601214). Interacts with D53 (PubMed:24336200). Interacts with WOX1 (PubMed:24336200, PubMed:25697101, PubMed:26601214). Interacts with MOF1 (PubMed:32680975).</text>
</comment>
<comment type="tissue specificity">
    <text evidence="6">Expressed in panicles, stems, leaves, spikelets and seed endosperm.</text>
</comment>
<comment type="developmental stage">
    <text evidence="6">Highest expression in endosperm at 7 days after pollination and in flag leaf at 14 days after heading.</text>
</comment>
<comment type="domain">
    <text evidence="9">The N-terminal TOPLESS domain (TPD)(1-209) binds directly to a 12-amino acid LxLxL EAR motif peptide, but no binding if the leucin residues are replaced.</text>
</comment>
<comment type="sequence caution" evidence="14">
    <conflict type="erroneous gene model prediction">
        <sequence resource="EMBL-CDS" id="BAS71376"/>
    </conflict>
</comment>
<accession>Q5NBT9</accession>
<accession>A0A0P0V0G9</accession>
<proteinExistence type="evidence at protein level"/>
<dbReference type="EMBL" id="AB638271">
    <property type="protein sequence ID" value="BAL44268.1"/>
    <property type="molecule type" value="mRNA"/>
</dbReference>
<dbReference type="EMBL" id="AP000492">
    <property type="protein sequence ID" value="BAD81067.1"/>
    <property type="molecule type" value="Genomic_DNA"/>
</dbReference>
<dbReference type="EMBL" id="AP008207">
    <property type="protein sequence ID" value="BAF04530.1"/>
    <property type="molecule type" value="Genomic_DNA"/>
</dbReference>
<dbReference type="EMBL" id="AP014957">
    <property type="protein sequence ID" value="BAS71375.1"/>
    <property type="molecule type" value="Genomic_DNA"/>
</dbReference>
<dbReference type="EMBL" id="AP014957">
    <property type="protein sequence ID" value="BAS71376.1"/>
    <property type="status" value="ALT_SEQ"/>
    <property type="molecule type" value="Genomic_DNA"/>
</dbReference>
<dbReference type="EMBL" id="CM000138">
    <property type="protein sequence ID" value="EEE54253.1"/>
    <property type="molecule type" value="Genomic_DNA"/>
</dbReference>
<dbReference type="RefSeq" id="XP_015617818.1">
    <property type="nucleotide sequence ID" value="XM_015762332.1"/>
</dbReference>
<dbReference type="PDB" id="4ZHE">
    <property type="method" value="X-ray"/>
    <property type="resolution" value="2.50 A"/>
    <property type="chains" value="A/B/C/D=1-209"/>
</dbReference>
<dbReference type="PDB" id="5C6Q">
    <property type="method" value="X-ray"/>
    <property type="resolution" value="3.25 A"/>
    <property type="chains" value="A=1-209"/>
</dbReference>
<dbReference type="PDB" id="5C6V">
    <property type="method" value="X-ray"/>
    <property type="resolution" value="3.10 A"/>
    <property type="chains" value="A/B/C/D=1-209"/>
</dbReference>
<dbReference type="PDB" id="5C7E">
    <property type="method" value="X-ray"/>
    <property type="resolution" value="3.10 A"/>
    <property type="chains" value="A/B/C/D/E/F=1-209"/>
</dbReference>
<dbReference type="PDB" id="5C7F">
    <property type="method" value="X-ray"/>
    <property type="resolution" value="2.70 A"/>
    <property type="chains" value="A/B/C/D=1-209"/>
</dbReference>
<dbReference type="PDB" id="5J9K">
    <property type="method" value="X-ray"/>
    <property type="resolution" value="2.55 A"/>
    <property type="chains" value="A/B=1-209"/>
</dbReference>
<dbReference type="PDB" id="5JA5">
    <property type="method" value="X-ray"/>
    <property type="resolution" value="2.00 A"/>
    <property type="chains" value="A=1-209"/>
</dbReference>
<dbReference type="PDB" id="5JGC">
    <property type="method" value="X-ray"/>
    <property type="resolution" value="2.08 A"/>
    <property type="chains" value="A=1-209"/>
</dbReference>
<dbReference type="PDB" id="5JHP">
    <property type="method" value="X-ray"/>
    <property type="resolution" value="3.15 A"/>
    <property type="chains" value="A/B/C/D=1-209"/>
</dbReference>
<dbReference type="PDBsum" id="4ZHE"/>
<dbReference type="PDBsum" id="5C6Q"/>
<dbReference type="PDBsum" id="5C6V"/>
<dbReference type="PDBsum" id="5C7E"/>
<dbReference type="PDBsum" id="5C7F"/>
<dbReference type="PDBsum" id="5J9K"/>
<dbReference type="PDBsum" id="5JA5"/>
<dbReference type="PDBsum" id="5JGC"/>
<dbReference type="PDBsum" id="5JHP"/>
<dbReference type="SMR" id="Q5NBT9"/>
<dbReference type="FunCoup" id="Q5NBT9">
    <property type="interactions" value="1846"/>
</dbReference>
<dbReference type="STRING" id="39947.Q5NBT9"/>
<dbReference type="iPTMnet" id="Q5NBT9"/>
<dbReference type="PaxDb" id="39947-Q5NBT9"/>
<dbReference type="EnsemblPlants" id="Os01t0254100-01">
    <property type="protein sequence ID" value="Os01t0254100-01"/>
    <property type="gene ID" value="Os01g0254100"/>
</dbReference>
<dbReference type="Gramene" id="Os01t0254100-01">
    <property type="protein sequence ID" value="Os01t0254100-01"/>
    <property type="gene ID" value="Os01g0254100"/>
</dbReference>
<dbReference type="KEGG" id="dosa:Os01g0254100"/>
<dbReference type="eggNOG" id="KOG0266">
    <property type="taxonomic scope" value="Eukaryota"/>
</dbReference>
<dbReference type="InParanoid" id="Q5NBT9"/>
<dbReference type="OMA" id="CLWSIDS"/>
<dbReference type="OrthoDB" id="1602884at2759"/>
<dbReference type="PlantReactome" id="R-OSA-5632095">
    <property type="pathway name" value="Brassinosteroid signaling"/>
</dbReference>
<dbReference type="PlantReactome" id="R-OSA-5654828">
    <property type="pathway name" value="Strigolactone signaling"/>
</dbReference>
<dbReference type="PlantReactome" id="R-OSA-6787011">
    <property type="pathway name" value="Jasmonic acid signaling"/>
</dbReference>
<dbReference type="PlantReactome" id="R-OSA-6788019">
    <property type="pathway name" value="Salicylic acid signaling"/>
</dbReference>
<dbReference type="EvolutionaryTrace" id="Q5NBT9"/>
<dbReference type="Proteomes" id="UP000000763">
    <property type="component" value="Chromosome 1"/>
</dbReference>
<dbReference type="Proteomes" id="UP000007752">
    <property type="component" value="Chromosome 1"/>
</dbReference>
<dbReference type="Proteomes" id="UP000059680">
    <property type="component" value="Chromosome 1"/>
</dbReference>
<dbReference type="GO" id="GO:0005886">
    <property type="term" value="C:plasma membrane"/>
    <property type="evidence" value="ECO:0000314"/>
    <property type="project" value="PHI-base"/>
</dbReference>
<dbReference type="GO" id="GO:0140311">
    <property type="term" value="F:protein sequestering activity"/>
    <property type="evidence" value="ECO:0000353"/>
    <property type="project" value="PHI-base"/>
</dbReference>
<dbReference type="GO" id="GO:0062208">
    <property type="term" value="P:positive regulation of pattern recognition receptor signaling pathway"/>
    <property type="evidence" value="ECO:0000315"/>
    <property type="project" value="PHI-base"/>
</dbReference>
<dbReference type="GO" id="GO:0006355">
    <property type="term" value="P:regulation of DNA-templated transcription"/>
    <property type="evidence" value="ECO:0000318"/>
    <property type="project" value="GO_Central"/>
</dbReference>
<dbReference type="FunFam" id="2.130.10.10:FF:000479">
    <property type="entry name" value="Topless-related protein 3"/>
    <property type="match status" value="1"/>
</dbReference>
<dbReference type="Gene3D" id="2.130.10.10">
    <property type="entry name" value="YVTN repeat-like/Quinoprotein amine dehydrogenase"/>
    <property type="match status" value="4"/>
</dbReference>
<dbReference type="InterPro" id="IPR006595">
    <property type="entry name" value="CTLH_C"/>
</dbReference>
<dbReference type="InterPro" id="IPR006594">
    <property type="entry name" value="LisH"/>
</dbReference>
<dbReference type="InterPro" id="IPR011047">
    <property type="entry name" value="Quinoprotein_ADH-like_sf"/>
</dbReference>
<dbReference type="InterPro" id="IPR027728">
    <property type="entry name" value="Topless_fam"/>
</dbReference>
<dbReference type="InterPro" id="IPR048419">
    <property type="entry name" value="Topless_Znf"/>
</dbReference>
<dbReference type="InterPro" id="IPR054532">
    <property type="entry name" value="TPL_SMU1_LisH-like"/>
</dbReference>
<dbReference type="InterPro" id="IPR054080">
    <property type="entry name" value="TPR1-like_2nd"/>
</dbReference>
<dbReference type="InterPro" id="IPR015943">
    <property type="entry name" value="WD40/YVTN_repeat-like_dom_sf"/>
</dbReference>
<dbReference type="InterPro" id="IPR019775">
    <property type="entry name" value="WD40_repeat_CS"/>
</dbReference>
<dbReference type="InterPro" id="IPR036322">
    <property type="entry name" value="WD40_repeat_dom_sf"/>
</dbReference>
<dbReference type="InterPro" id="IPR001680">
    <property type="entry name" value="WD40_rpt"/>
</dbReference>
<dbReference type="PANTHER" id="PTHR44083">
    <property type="entry name" value="TOPLESS-RELATED PROTEIN 1-RELATED"/>
    <property type="match status" value="1"/>
</dbReference>
<dbReference type="PANTHER" id="PTHR44083:SF2">
    <property type="entry name" value="TOPLESS-RELATED PROTEIN 3"/>
    <property type="match status" value="1"/>
</dbReference>
<dbReference type="Pfam" id="PF17814">
    <property type="entry name" value="LisH_TPL"/>
    <property type="match status" value="1"/>
</dbReference>
<dbReference type="Pfam" id="PF21889">
    <property type="entry name" value="TPR1-like_2nd"/>
    <property type="match status" value="1"/>
</dbReference>
<dbReference type="Pfam" id="PF00400">
    <property type="entry name" value="WD40"/>
    <property type="match status" value="5"/>
</dbReference>
<dbReference type="Pfam" id="PF21359">
    <property type="entry name" value="zf_topless"/>
    <property type="match status" value="1"/>
</dbReference>
<dbReference type="SMART" id="SM00668">
    <property type="entry name" value="CTLH"/>
    <property type="match status" value="1"/>
</dbReference>
<dbReference type="SMART" id="SM00667">
    <property type="entry name" value="LisH"/>
    <property type="match status" value="1"/>
</dbReference>
<dbReference type="SMART" id="SM00320">
    <property type="entry name" value="WD40"/>
    <property type="match status" value="11"/>
</dbReference>
<dbReference type="SUPFAM" id="SSF50998">
    <property type="entry name" value="Quinoprotein alcohol dehydrogenase-like"/>
    <property type="match status" value="1"/>
</dbReference>
<dbReference type="SUPFAM" id="SSF50978">
    <property type="entry name" value="WD40 repeat-like"/>
    <property type="match status" value="2"/>
</dbReference>
<dbReference type="PROSITE" id="PS50897">
    <property type="entry name" value="CTLH"/>
    <property type="match status" value="1"/>
</dbReference>
<dbReference type="PROSITE" id="PS50896">
    <property type="entry name" value="LISH"/>
    <property type="match status" value="1"/>
</dbReference>
<dbReference type="PROSITE" id="PS00678">
    <property type="entry name" value="WD_REPEATS_1"/>
    <property type="match status" value="2"/>
</dbReference>
<dbReference type="PROSITE" id="PS50082">
    <property type="entry name" value="WD_REPEATS_2"/>
    <property type="match status" value="4"/>
</dbReference>
<dbReference type="PROSITE" id="PS50294">
    <property type="entry name" value="WD_REPEATS_REGION"/>
    <property type="match status" value="2"/>
</dbReference>
<evidence type="ECO:0000250" key="1">
    <source>
        <dbReference type="UniProtKB" id="Q0J7U6"/>
    </source>
</evidence>
<evidence type="ECO:0000255" key="2"/>
<evidence type="ECO:0000255" key="3">
    <source>
        <dbReference type="PROSITE-ProRule" id="PRU00058"/>
    </source>
</evidence>
<evidence type="ECO:0000255" key="4">
    <source>
        <dbReference type="PROSITE-ProRule" id="PRU00126"/>
    </source>
</evidence>
<evidence type="ECO:0000256" key="5">
    <source>
        <dbReference type="SAM" id="MobiDB-lite"/>
    </source>
</evidence>
<evidence type="ECO:0000269" key="6">
    <source>
    </source>
</evidence>
<evidence type="ECO:0000269" key="7">
    <source>
    </source>
</evidence>
<evidence type="ECO:0000269" key="8">
    <source>
    </source>
</evidence>
<evidence type="ECO:0000269" key="9">
    <source>
    </source>
</evidence>
<evidence type="ECO:0000269" key="10">
    <source>
    </source>
</evidence>
<evidence type="ECO:0000303" key="11">
    <source>
    </source>
</evidence>
<evidence type="ECO:0000303" key="12">
    <source>
    </source>
</evidence>
<evidence type="ECO:0000303" key="13">
    <source>
    </source>
</evidence>
<evidence type="ECO:0000305" key="14"/>
<evidence type="ECO:0000312" key="15">
    <source>
        <dbReference type="EMBL" id="BAD81067.1"/>
    </source>
</evidence>
<evidence type="ECO:0000312" key="16">
    <source>
        <dbReference type="EMBL" id="BAF04530.1"/>
    </source>
</evidence>
<evidence type="ECO:0000312" key="17">
    <source>
        <dbReference type="EMBL" id="BAS71375.1"/>
    </source>
</evidence>
<evidence type="ECO:0000312" key="18">
    <source>
        <dbReference type="EMBL" id="EEE54253.1"/>
    </source>
</evidence>
<evidence type="ECO:0000312" key="19">
    <source>
        <dbReference type="Proteomes" id="UP000059680"/>
    </source>
</evidence>
<evidence type="ECO:0007829" key="20">
    <source>
        <dbReference type="PDB" id="4ZHE"/>
    </source>
</evidence>
<evidence type="ECO:0007829" key="21">
    <source>
        <dbReference type="PDB" id="5JA5"/>
    </source>
</evidence>
<evidence type="ECO:0007829" key="22">
    <source>
        <dbReference type="PDB" id="5JGC"/>
    </source>
</evidence>
<keyword id="KW-0002">3D-structure</keyword>
<keyword id="KW-1185">Reference proteome</keyword>
<keyword id="KW-0677">Repeat</keyword>
<keyword id="KW-0853">WD repeat</keyword>